<keyword id="KW-0012">Acyltransferase</keyword>
<keyword id="KW-1003">Cell membrane</keyword>
<keyword id="KW-0449">Lipoprotein</keyword>
<keyword id="KW-0472">Membrane</keyword>
<keyword id="KW-0564">Palmitate</keyword>
<keyword id="KW-0597">Phosphoprotein</keyword>
<keyword id="KW-1185">Reference proteome</keyword>
<keyword id="KW-0808">Transferase</keyword>
<keyword id="KW-0812">Transmembrane</keyword>
<keyword id="KW-1133">Transmembrane helix</keyword>
<proteinExistence type="evidence at protein level"/>
<sequence length="476" mass="53695">MLDLQPSDRRHGAPSSSGGVSGGDELIRTYKGWKGNNVFFLGGRLVFGPDARSILITVFLITAPVIVFCIFVGRKFIDDFPHHRGVSVLAVAVGLILLDLVFLLLTSARDPGIIPRNLYPPEPESNEGNGEPRLAHTPQSRLPRTKDMIVNGITVKIKYCDTCMLYRPPRASHCSICNNCVEKFDHHCPWLGQCIGLRNYRFYFMFVLCSTLLCIYVHVFCWIYVKRIMDSENINIWKSFLKTPASIALIIYTFICVWFVGGLTCFHLYLMSTNQSTYENFRYRYDRHENPFNKGIVGNFMEVFCTNVAVSQNSFREKVSKEPAIPPRTVNGGMSSPSLQKVSNDIEMGRKPVWHETVEEELGDIEKDMEAGVASRDLSRMLPPEESEGRGIMHSRESSRGRGIMHSRESSRGRRGGSWELSSRVNEDLRTRDESVSRVGEDSSESSDNDASRDLHVEIYDAVTSRGRTGTGIGRL</sequence>
<accession>Q9M306</accession>
<organism>
    <name type="scientific">Arabidopsis thaliana</name>
    <name type="common">Mouse-ear cress</name>
    <dbReference type="NCBI Taxonomy" id="3702"/>
    <lineage>
        <taxon>Eukaryota</taxon>
        <taxon>Viridiplantae</taxon>
        <taxon>Streptophyta</taxon>
        <taxon>Embryophyta</taxon>
        <taxon>Tracheophyta</taxon>
        <taxon>Spermatophyta</taxon>
        <taxon>Magnoliopsida</taxon>
        <taxon>eudicotyledons</taxon>
        <taxon>Gunneridae</taxon>
        <taxon>Pentapetalae</taxon>
        <taxon>rosids</taxon>
        <taxon>malvids</taxon>
        <taxon>Brassicales</taxon>
        <taxon>Brassicaceae</taxon>
        <taxon>Camelineae</taxon>
        <taxon>Arabidopsis</taxon>
    </lineage>
</organism>
<evidence type="ECO:0000250" key="1"/>
<evidence type="ECO:0000250" key="2">
    <source>
        <dbReference type="UniProtKB" id="Q0WQK2"/>
    </source>
</evidence>
<evidence type="ECO:0000255" key="3"/>
<evidence type="ECO:0000255" key="4">
    <source>
        <dbReference type="PROSITE-ProRule" id="PRU00067"/>
    </source>
</evidence>
<evidence type="ECO:0000256" key="5">
    <source>
        <dbReference type="SAM" id="MobiDB-lite"/>
    </source>
</evidence>
<evidence type="ECO:0000269" key="6">
    <source ref="3"/>
</evidence>
<evidence type="ECO:0000305" key="7"/>
<evidence type="ECO:0007744" key="8">
    <source>
    </source>
</evidence>
<name>ZDH10_ARATH</name>
<reference key="1">
    <citation type="journal article" date="2000" name="Nature">
        <title>Sequence and analysis of chromosome 3 of the plant Arabidopsis thaliana.</title>
        <authorList>
            <person name="Salanoubat M."/>
            <person name="Lemcke K."/>
            <person name="Rieger M."/>
            <person name="Ansorge W."/>
            <person name="Unseld M."/>
            <person name="Fartmann B."/>
            <person name="Valle G."/>
            <person name="Bloecker H."/>
            <person name="Perez-Alonso M."/>
            <person name="Obermaier B."/>
            <person name="Delseny M."/>
            <person name="Boutry M."/>
            <person name="Grivell L.A."/>
            <person name="Mache R."/>
            <person name="Puigdomenech P."/>
            <person name="De Simone V."/>
            <person name="Choisne N."/>
            <person name="Artiguenave F."/>
            <person name="Robert C."/>
            <person name="Brottier P."/>
            <person name="Wincker P."/>
            <person name="Cattolico L."/>
            <person name="Weissenbach J."/>
            <person name="Saurin W."/>
            <person name="Quetier F."/>
            <person name="Schaefer M."/>
            <person name="Mueller-Auer S."/>
            <person name="Gabel C."/>
            <person name="Fuchs M."/>
            <person name="Benes V."/>
            <person name="Wurmbach E."/>
            <person name="Drzonek H."/>
            <person name="Erfle H."/>
            <person name="Jordan N."/>
            <person name="Bangert S."/>
            <person name="Wiedelmann R."/>
            <person name="Kranz H."/>
            <person name="Voss H."/>
            <person name="Holland R."/>
            <person name="Brandt P."/>
            <person name="Nyakatura G."/>
            <person name="Vezzi A."/>
            <person name="D'Angelo M."/>
            <person name="Pallavicini A."/>
            <person name="Toppo S."/>
            <person name="Simionati B."/>
            <person name="Conrad A."/>
            <person name="Hornischer K."/>
            <person name="Kauer G."/>
            <person name="Loehnert T.-H."/>
            <person name="Nordsiek G."/>
            <person name="Reichelt J."/>
            <person name="Scharfe M."/>
            <person name="Schoen O."/>
            <person name="Bargues M."/>
            <person name="Terol J."/>
            <person name="Climent J."/>
            <person name="Navarro P."/>
            <person name="Collado C."/>
            <person name="Perez-Perez A."/>
            <person name="Ottenwaelder B."/>
            <person name="Duchemin D."/>
            <person name="Cooke R."/>
            <person name="Laudie M."/>
            <person name="Berger-Llauro C."/>
            <person name="Purnelle B."/>
            <person name="Masuy D."/>
            <person name="de Haan M."/>
            <person name="Maarse A.C."/>
            <person name="Alcaraz J.-P."/>
            <person name="Cottet A."/>
            <person name="Casacuberta E."/>
            <person name="Monfort A."/>
            <person name="Argiriou A."/>
            <person name="Flores M."/>
            <person name="Liguori R."/>
            <person name="Vitale D."/>
            <person name="Mannhaupt G."/>
            <person name="Haase D."/>
            <person name="Schoof H."/>
            <person name="Rudd S."/>
            <person name="Zaccaria P."/>
            <person name="Mewes H.-W."/>
            <person name="Mayer K.F.X."/>
            <person name="Kaul S."/>
            <person name="Town C.D."/>
            <person name="Koo H.L."/>
            <person name="Tallon L.J."/>
            <person name="Jenkins J."/>
            <person name="Rooney T."/>
            <person name="Rizzo M."/>
            <person name="Walts A."/>
            <person name="Utterback T."/>
            <person name="Fujii C.Y."/>
            <person name="Shea T.P."/>
            <person name="Creasy T.H."/>
            <person name="Haas B."/>
            <person name="Maiti R."/>
            <person name="Wu D."/>
            <person name="Peterson J."/>
            <person name="Van Aken S."/>
            <person name="Pai G."/>
            <person name="Militscher J."/>
            <person name="Sellers P."/>
            <person name="Gill J.E."/>
            <person name="Feldblyum T.V."/>
            <person name="Preuss D."/>
            <person name="Lin X."/>
            <person name="Nierman W.C."/>
            <person name="Salzberg S.L."/>
            <person name="White O."/>
            <person name="Venter J.C."/>
            <person name="Fraser C.M."/>
            <person name="Kaneko T."/>
            <person name="Nakamura Y."/>
            <person name="Sato S."/>
            <person name="Kato T."/>
            <person name="Asamizu E."/>
            <person name="Sasamoto S."/>
            <person name="Kimura T."/>
            <person name="Idesawa K."/>
            <person name="Kawashima K."/>
            <person name="Kishida Y."/>
            <person name="Kiyokawa C."/>
            <person name="Kohara M."/>
            <person name="Matsumoto M."/>
            <person name="Matsuno A."/>
            <person name="Muraki A."/>
            <person name="Nakayama S."/>
            <person name="Nakazaki N."/>
            <person name="Shinpo S."/>
            <person name="Takeuchi C."/>
            <person name="Wada T."/>
            <person name="Watanabe A."/>
            <person name="Yamada M."/>
            <person name="Yasuda M."/>
            <person name="Tabata S."/>
        </authorList>
    </citation>
    <scope>NUCLEOTIDE SEQUENCE [LARGE SCALE GENOMIC DNA]</scope>
    <source>
        <strain>cv. Columbia</strain>
    </source>
</reference>
<reference key="2">
    <citation type="journal article" date="2017" name="Plant J.">
        <title>Araport11: a complete reannotation of the Arabidopsis thaliana reference genome.</title>
        <authorList>
            <person name="Cheng C.Y."/>
            <person name="Krishnakumar V."/>
            <person name="Chan A.P."/>
            <person name="Thibaud-Nissen F."/>
            <person name="Schobel S."/>
            <person name="Town C.D."/>
        </authorList>
    </citation>
    <scope>GENOME REANNOTATION</scope>
    <source>
        <strain>cv. Columbia</strain>
    </source>
</reference>
<reference key="3">
    <citation type="book" date="2007" name="Proceedings of the 18th international conference on Arabidopsis research">
        <title>S-acylation: dynamic control of plant development and sigalling by lipid modification of proteins.</title>
        <authorList>
            <person name="Hemsley P.A."/>
            <person name="Taylor L."/>
            <person name="Grierson C.S."/>
        </authorList>
    </citation>
    <scope>GENE FAMILY</scope>
    <scope>FUNCTION</scope>
</reference>
<reference key="4">
    <citation type="journal article" date="2009" name="J. Proteomics">
        <title>Phosphoproteomic analysis of nuclei-enriched fractions from Arabidopsis thaliana.</title>
        <authorList>
            <person name="Jones A.M.E."/>
            <person name="MacLean D."/>
            <person name="Studholme D.J."/>
            <person name="Serna-Sanz A."/>
            <person name="Andreasson E."/>
            <person name="Rathjen J.P."/>
            <person name="Peck S.C."/>
        </authorList>
    </citation>
    <scope>PHOSPHORYLATION [LARGE SCALE ANALYSIS] AT SER-418</scope>
    <scope>IDENTIFICATION BY MASS SPECTROMETRY [LARGE SCALE ANALYSIS]</scope>
    <source>
        <strain>cv. Columbia</strain>
    </source>
</reference>
<reference key="5">
    <citation type="journal article" date="2012" name="Plant Physiol.">
        <title>Genomics and localization of the Arabidopsis DHHC-cysteine-rich domain S-acyltransferase protein family.</title>
        <authorList>
            <person name="Batistic O."/>
        </authorList>
    </citation>
    <scope>SUBCELLULAR LOCATION</scope>
    <scope>GENE FAMILY</scope>
    <scope>NOMENCLATURE</scope>
</reference>
<dbReference type="EC" id="2.3.1.225"/>
<dbReference type="EMBL" id="AL132963">
    <property type="protein sequence ID" value="CAB87904.1"/>
    <property type="status" value="ALT_SEQ"/>
    <property type="molecule type" value="Genomic_DNA"/>
</dbReference>
<dbReference type="EMBL" id="CP002686">
    <property type="protein sequence ID" value="AEE78453.1"/>
    <property type="molecule type" value="Genomic_DNA"/>
</dbReference>
<dbReference type="PIR" id="T49272">
    <property type="entry name" value="T49272"/>
</dbReference>
<dbReference type="RefSeq" id="NP_190445.2">
    <property type="nucleotide sequence ID" value="NM_114735.4"/>
</dbReference>
<dbReference type="SMR" id="Q9M306"/>
<dbReference type="FunCoup" id="Q9M306">
    <property type="interactions" value="3238"/>
</dbReference>
<dbReference type="STRING" id="3702.Q9M306"/>
<dbReference type="iPTMnet" id="Q9M306"/>
<dbReference type="PaxDb" id="3702-AT3G48760.1"/>
<dbReference type="ProteomicsDB" id="242966"/>
<dbReference type="EnsemblPlants" id="AT3G48760.1">
    <property type="protein sequence ID" value="AT3G48760.1"/>
    <property type="gene ID" value="AT3G48760"/>
</dbReference>
<dbReference type="GeneID" id="824037"/>
<dbReference type="Gramene" id="AT3G48760.1">
    <property type="protein sequence ID" value="AT3G48760.1"/>
    <property type="gene ID" value="AT3G48760"/>
</dbReference>
<dbReference type="KEGG" id="ath:AT3G48760"/>
<dbReference type="Araport" id="AT3G48760"/>
<dbReference type="TAIR" id="AT3G48760"/>
<dbReference type="eggNOG" id="KOG1311">
    <property type="taxonomic scope" value="Eukaryota"/>
</dbReference>
<dbReference type="HOGENOM" id="CLU_018741_2_2_1"/>
<dbReference type="InParanoid" id="Q9M306"/>
<dbReference type="OMA" id="NFRAKIP"/>
<dbReference type="PhylomeDB" id="Q9M306"/>
<dbReference type="BRENDA" id="2.3.1.225">
    <property type="organism ID" value="399"/>
</dbReference>
<dbReference type="PRO" id="PR:Q9M306"/>
<dbReference type="Proteomes" id="UP000006548">
    <property type="component" value="Chromosome 3"/>
</dbReference>
<dbReference type="ExpressionAtlas" id="Q9M306">
    <property type="expression patterns" value="baseline and differential"/>
</dbReference>
<dbReference type="GO" id="GO:0005886">
    <property type="term" value="C:plasma membrane"/>
    <property type="evidence" value="ECO:0007669"/>
    <property type="project" value="UniProtKB-SubCell"/>
</dbReference>
<dbReference type="GO" id="GO:0019706">
    <property type="term" value="F:protein-cysteine S-palmitoyltransferase activity"/>
    <property type="evidence" value="ECO:0007669"/>
    <property type="project" value="UniProtKB-EC"/>
</dbReference>
<dbReference type="InterPro" id="IPR001594">
    <property type="entry name" value="Palmitoyltrfase_DHHC"/>
</dbReference>
<dbReference type="InterPro" id="IPR039859">
    <property type="entry name" value="PFA4/ZDH16/20/ERF2-like"/>
</dbReference>
<dbReference type="PANTHER" id="PTHR22883:SF432">
    <property type="entry name" value="PROTEIN S-ACYLTRANSFERASE 5-RELATED"/>
    <property type="match status" value="1"/>
</dbReference>
<dbReference type="PANTHER" id="PTHR22883">
    <property type="entry name" value="ZINC FINGER DHHC DOMAIN CONTAINING PROTEIN"/>
    <property type="match status" value="1"/>
</dbReference>
<dbReference type="Pfam" id="PF01529">
    <property type="entry name" value="DHHC"/>
    <property type="match status" value="1"/>
</dbReference>
<dbReference type="PROSITE" id="PS50216">
    <property type="entry name" value="DHHC"/>
    <property type="match status" value="1"/>
</dbReference>
<gene>
    <name type="primary">PAT05</name>
    <name type="ordered locus">At3g48760</name>
    <name type="ORF">T21J18.30</name>
</gene>
<feature type="chain" id="PRO_0000315406" description="Probable protein S-acyltransferase 5">
    <location>
        <begin position="1"/>
        <end position="476"/>
    </location>
</feature>
<feature type="transmembrane region" description="Helical" evidence="3">
    <location>
        <begin position="53"/>
        <end position="73"/>
    </location>
</feature>
<feature type="transmembrane region" description="Helical" evidence="3">
    <location>
        <begin position="85"/>
        <end position="105"/>
    </location>
</feature>
<feature type="transmembrane region" description="Helical" evidence="3">
    <location>
        <begin position="209"/>
        <end position="223"/>
    </location>
</feature>
<feature type="transmembrane region" description="Helical" evidence="3">
    <location>
        <begin position="246"/>
        <end position="266"/>
    </location>
</feature>
<feature type="domain" description="DHHC" evidence="4">
    <location>
        <begin position="158"/>
        <end position="208"/>
    </location>
</feature>
<feature type="region of interest" description="Disordered" evidence="5">
    <location>
        <begin position="1"/>
        <end position="21"/>
    </location>
</feature>
<feature type="region of interest" description="Disordered" evidence="5">
    <location>
        <begin position="119"/>
        <end position="138"/>
    </location>
</feature>
<feature type="region of interest" description="Disordered" evidence="5">
    <location>
        <begin position="320"/>
        <end position="340"/>
    </location>
</feature>
<feature type="region of interest" description="Disordered" evidence="5">
    <location>
        <begin position="373"/>
        <end position="454"/>
    </location>
</feature>
<feature type="compositionally biased region" description="Basic and acidic residues" evidence="5">
    <location>
        <begin position="1"/>
        <end position="11"/>
    </location>
</feature>
<feature type="compositionally biased region" description="Basic and acidic residues" evidence="5">
    <location>
        <begin position="387"/>
        <end position="412"/>
    </location>
</feature>
<feature type="compositionally biased region" description="Basic and acidic residues" evidence="5">
    <location>
        <begin position="425"/>
        <end position="441"/>
    </location>
</feature>
<feature type="active site" description="S-palmitoyl cysteine intermediate" evidence="1">
    <location>
        <position position="188"/>
    </location>
</feature>
<feature type="modified residue" description="Phosphoserine" evidence="2">
    <location>
        <position position="336"/>
    </location>
</feature>
<feature type="modified residue" description="Phosphoserine" evidence="8">
    <location>
        <position position="418"/>
    </location>
</feature>
<protein>
    <recommendedName>
        <fullName>Probable protein S-acyltransferase 5</fullName>
        <ecNumber>2.3.1.225</ecNumber>
    </recommendedName>
    <alternativeName>
        <fullName>Probable palmitoyltransferase At3g48760</fullName>
    </alternativeName>
    <alternativeName>
        <fullName>Zinc finger DHHC domain-containing protein At3g48760</fullName>
    </alternativeName>
</protein>
<comment type="function">
    <text evidence="1 6">Palmitoyl acyltransferase.</text>
</comment>
<comment type="catalytic activity">
    <reaction>
        <text>L-cysteinyl-[protein] + hexadecanoyl-CoA = S-hexadecanoyl-L-cysteinyl-[protein] + CoA</text>
        <dbReference type="Rhea" id="RHEA:36683"/>
        <dbReference type="Rhea" id="RHEA-COMP:10131"/>
        <dbReference type="Rhea" id="RHEA-COMP:11032"/>
        <dbReference type="ChEBI" id="CHEBI:29950"/>
        <dbReference type="ChEBI" id="CHEBI:57287"/>
        <dbReference type="ChEBI" id="CHEBI:57379"/>
        <dbReference type="ChEBI" id="CHEBI:74151"/>
        <dbReference type="EC" id="2.3.1.225"/>
    </reaction>
</comment>
<comment type="subcellular location">
    <subcellularLocation>
        <location evidence="7">Cell membrane</location>
        <topology evidence="7">Multi-pass membrane protein</topology>
    </subcellularLocation>
</comment>
<comment type="domain">
    <text evidence="1">The DHHC domain is required for palmitoyltransferase activity.</text>
</comment>
<comment type="similarity">
    <text evidence="7">Belongs to the DHHC palmitoyltransferase family.</text>
</comment>
<comment type="sequence caution" evidence="7">
    <conflict type="erroneous gene model prediction">
        <sequence resource="EMBL-CDS" id="CAB87904"/>
    </conflict>
</comment>